<feature type="signal peptide" evidence="1">
    <location>
        <begin position="1"/>
        <end position="39"/>
    </location>
</feature>
<feature type="chain" id="PRO_0000259031" description="Tol-Pal system protein TolB" evidence="1">
    <location>
        <begin position="40"/>
        <end position="441"/>
    </location>
</feature>
<organism>
    <name type="scientific">Bordetella avium (strain 197N)</name>
    <dbReference type="NCBI Taxonomy" id="360910"/>
    <lineage>
        <taxon>Bacteria</taxon>
        <taxon>Pseudomonadati</taxon>
        <taxon>Pseudomonadota</taxon>
        <taxon>Betaproteobacteria</taxon>
        <taxon>Burkholderiales</taxon>
        <taxon>Alcaligenaceae</taxon>
        <taxon>Bordetella</taxon>
    </lineage>
</organism>
<protein>
    <recommendedName>
        <fullName evidence="1">Tol-Pal system protein TolB</fullName>
    </recommendedName>
</protein>
<comment type="function">
    <text evidence="1">Part of the Tol-Pal system, which plays a role in outer membrane invagination during cell division and is important for maintaining outer membrane integrity.</text>
</comment>
<comment type="subunit">
    <text evidence="1">The Tol-Pal system is composed of five core proteins: the inner membrane proteins TolA, TolQ and TolR, the periplasmic protein TolB and the outer membrane protein Pal. They form a network linking the inner and outer membranes and the peptidoglycan layer.</text>
</comment>
<comment type="subcellular location">
    <subcellularLocation>
        <location evidence="1">Periplasm</location>
    </subcellularLocation>
</comment>
<comment type="similarity">
    <text evidence="1">Belongs to the TolB family.</text>
</comment>
<gene>
    <name evidence="1" type="primary">tolB</name>
    <name type="ordered locus">BAV2915</name>
</gene>
<evidence type="ECO:0000255" key="1">
    <source>
        <dbReference type="HAMAP-Rule" id="MF_00671"/>
    </source>
</evidence>
<dbReference type="EMBL" id="AM167904">
    <property type="protein sequence ID" value="CAJ50525.1"/>
    <property type="molecule type" value="Genomic_DNA"/>
</dbReference>
<dbReference type="SMR" id="Q2KV91"/>
<dbReference type="STRING" id="360910.BAV2915"/>
<dbReference type="KEGG" id="bav:BAV2915"/>
<dbReference type="eggNOG" id="COG0823">
    <property type="taxonomic scope" value="Bacteria"/>
</dbReference>
<dbReference type="HOGENOM" id="CLU_047123_0_0_4"/>
<dbReference type="Proteomes" id="UP000001977">
    <property type="component" value="Chromosome"/>
</dbReference>
<dbReference type="GO" id="GO:0042597">
    <property type="term" value="C:periplasmic space"/>
    <property type="evidence" value="ECO:0007669"/>
    <property type="project" value="UniProtKB-SubCell"/>
</dbReference>
<dbReference type="GO" id="GO:0051301">
    <property type="term" value="P:cell division"/>
    <property type="evidence" value="ECO:0007669"/>
    <property type="project" value="UniProtKB-UniRule"/>
</dbReference>
<dbReference type="GO" id="GO:0017038">
    <property type="term" value="P:protein import"/>
    <property type="evidence" value="ECO:0007669"/>
    <property type="project" value="InterPro"/>
</dbReference>
<dbReference type="Gene3D" id="2.120.10.30">
    <property type="entry name" value="TolB, C-terminal domain"/>
    <property type="match status" value="1"/>
</dbReference>
<dbReference type="Gene3D" id="3.40.50.10070">
    <property type="entry name" value="TolB, N-terminal domain"/>
    <property type="match status" value="1"/>
</dbReference>
<dbReference type="HAMAP" id="MF_00671">
    <property type="entry name" value="TolB"/>
    <property type="match status" value="1"/>
</dbReference>
<dbReference type="InterPro" id="IPR011042">
    <property type="entry name" value="6-blade_b-propeller_TolB-like"/>
</dbReference>
<dbReference type="InterPro" id="IPR011659">
    <property type="entry name" value="PD40"/>
</dbReference>
<dbReference type="InterPro" id="IPR014167">
    <property type="entry name" value="Tol-Pal_TolB"/>
</dbReference>
<dbReference type="InterPro" id="IPR007195">
    <property type="entry name" value="TolB_N"/>
</dbReference>
<dbReference type="NCBIfam" id="TIGR02800">
    <property type="entry name" value="propeller_TolB"/>
    <property type="match status" value="1"/>
</dbReference>
<dbReference type="PANTHER" id="PTHR36842:SF1">
    <property type="entry name" value="PROTEIN TOLB"/>
    <property type="match status" value="1"/>
</dbReference>
<dbReference type="PANTHER" id="PTHR36842">
    <property type="entry name" value="PROTEIN TOLB HOMOLOG"/>
    <property type="match status" value="1"/>
</dbReference>
<dbReference type="Pfam" id="PF07676">
    <property type="entry name" value="PD40"/>
    <property type="match status" value="4"/>
</dbReference>
<dbReference type="Pfam" id="PF04052">
    <property type="entry name" value="TolB_N"/>
    <property type="match status" value="1"/>
</dbReference>
<dbReference type="SUPFAM" id="SSF52964">
    <property type="entry name" value="TolB, N-terminal domain"/>
    <property type="match status" value="1"/>
</dbReference>
<dbReference type="SUPFAM" id="SSF69304">
    <property type="entry name" value="Tricorn protease N-terminal domain"/>
    <property type="match status" value="1"/>
</dbReference>
<sequence length="441" mass="47563">MPTMTPAFSRASLSEALRSYGLALLLFLATLLAWQPAHAQLRVDISGTGATQYPIAIADFAGDDVRGRALAEVIRADLTRTGQFRLINAAGSGLTVDSPINYDDWRGRGADYVAYGSISQGADGRFEIRYRLADTVKKNQLDGVAFSGTEPELRRIAHQIADRIYEKITGVRGVFATRIAYVLKQGNTYELQVADADGQNPQVALRSREPIISPTWSPDGSKLAYVSFHSGKPVVYVQTLATRSQIPVANFKGNNSAPAWSPDGSQLAVALTQDGLSQIYIVSADGSAKPRRITRSPGIDTEPTFTPDGRSIIFTSDRSGGPQIYQVGLDGGDARRLTFNGSYNISPRISPDGSTLLYVARRDGAFRIASLNLPTGTETLLTDGRDDQSPSFAPNGMQVLYAATQNGRSVLAGVSSDGRVRQTLSVLNGEIREPTWGPFTR</sequence>
<keyword id="KW-0131">Cell cycle</keyword>
<keyword id="KW-0132">Cell division</keyword>
<keyword id="KW-0574">Periplasm</keyword>
<keyword id="KW-1185">Reference proteome</keyword>
<keyword id="KW-0732">Signal</keyword>
<accession>Q2KV91</accession>
<proteinExistence type="inferred from homology"/>
<reference key="1">
    <citation type="journal article" date="2006" name="J. Bacteriol.">
        <title>Comparison of the genome sequence of the poultry pathogen Bordetella avium with those of B. bronchiseptica, B. pertussis, and B. parapertussis reveals extensive diversity in surface structures associated with host interaction.</title>
        <authorList>
            <person name="Sebaihia M."/>
            <person name="Preston A."/>
            <person name="Maskell D.J."/>
            <person name="Kuzmiak H."/>
            <person name="Connell T.D."/>
            <person name="King N.D."/>
            <person name="Orndorff P.E."/>
            <person name="Miyamoto D.M."/>
            <person name="Thomson N.R."/>
            <person name="Harris D."/>
            <person name="Goble A."/>
            <person name="Lord A."/>
            <person name="Murphy L."/>
            <person name="Quail M.A."/>
            <person name="Rutter S."/>
            <person name="Squares R."/>
            <person name="Squares S."/>
            <person name="Woodward J."/>
            <person name="Parkhill J."/>
            <person name="Temple L.M."/>
        </authorList>
    </citation>
    <scope>NUCLEOTIDE SEQUENCE [LARGE SCALE GENOMIC DNA]</scope>
    <source>
        <strain>197N</strain>
    </source>
</reference>
<name>TOLB_BORA1</name>